<evidence type="ECO:0000250" key="1"/>
<evidence type="ECO:0000250" key="2">
    <source>
        <dbReference type="UniProtKB" id="P12785"/>
    </source>
</evidence>
<evidence type="ECO:0000250" key="3">
    <source>
        <dbReference type="UniProtKB" id="P49327"/>
    </source>
</evidence>
<protein>
    <recommendedName>
        <fullName>Fatty acid synthase</fullName>
        <ecNumber>2.3.1.85</ecNumber>
    </recommendedName>
</protein>
<proteinExistence type="inferred from homology"/>
<organism>
    <name type="scientific">Capra hircus</name>
    <name type="common">Goat</name>
    <dbReference type="NCBI Taxonomy" id="9925"/>
    <lineage>
        <taxon>Eukaryota</taxon>
        <taxon>Metazoa</taxon>
        <taxon>Chordata</taxon>
        <taxon>Craniata</taxon>
        <taxon>Vertebrata</taxon>
        <taxon>Euteleostomi</taxon>
        <taxon>Mammalia</taxon>
        <taxon>Eutheria</taxon>
        <taxon>Laurasiatheria</taxon>
        <taxon>Artiodactyla</taxon>
        <taxon>Ruminantia</taxon>
        <taxon>Pecora</taxon>
        <taxon>Bovidae</taxon>
        <taxon>Caprinae</taxon>
        <taxon>Capra</taxon>
    </lineage>
</organism>
<sequence length="35" mass="3808">MGLRPDGIIGHSLGEVARAYYNGRISQEEAILSAY</sequence>
<dbReference type="EC" id="2.3.1.85"/>
<dbReference type="PIR" id="S07131">
    <property type="entry name" value="S07131"/>
</dbReference>
<dbReference type="SMR" id="P08757"/>
<dbReference type="STRING" id="9925.ENSCHIP00000019407"/>
<dbReference type="Proteomes" id="UP000291000">
    <property type="component" value="Unassembled WGS sequence"/>
</dbReference>
<dbReference type="Proteomes" id="UP000694566">
    <property type="component" value="Unplaced"/>
</dbReference>
<dbReference type="GO" id="GO:0005737">
    <property type="term" value="C:cytoplasm"/>
    <property type="evidence" value="ECO:0000250"/>
    <property type="project" value="UniProtKB"/>
</dbReference>
<dbReference type="GO" id="GO:0042470">
    <property type="term" value="C:melanosome"/>
    <property type="evidence" value="ECO:0007669"/>
    <property type="project" value="UniProtKB-SubCell"/>
</dbReference>
<dbReference type="GO" id="GO:0004312">
    <property type="term" value="F:fatty acid synthase activity"/>
    <property type="evidence" value="ECO:0007669"/>
    <property type="project" value="UniProtKB-EC"/>
</dbReference>
<dbReference type="GO" id="GO:0016787">
    <property type="term" value="F:hydrolase activity"/>
    <property type="evidence" value="ECO:0007669"/>
    <property type="project" value="UniProtKB-KW"/>
</dbReference>
<dbReference type="GO" id="GO:0006633">
    <property type="term" value="P:fatty acid biosynthetic process"/>
    <property type="evidence" value="ECO:0007669"/>
    <property type="project" value="UniProtKB-KW"/>
</dbReference>
<dbReference type="Gene3D" id="3.40.366.10">
    <property type="entry name" value="Malonyl-Coenzyme A Acyl Carrier Protein, domain 2"/>
    <property type="match status" value="1"/>
</dbReference>
<dbReference type="InterPro" id="IPR001227">
    <property type="entry name" value="Ac_transferase_dom_sf"/>
</dbReference>
<dbReference type="InterPro" id="IPR014043">
    <property type="entry name" value="Acyl_transferase_dom"/>
</dbReference>
<dbReference type="InterPro" id="IPR016035">
    <property type="entry name" value="Acyl_Trfase/lysoPLipase"/>
</dbReference>
<dbReference type="Pfam" id="PF00698">
    <property type="entry name" value="Acyl_transf_1"/>
    <property type="match status" value="1"/>
</dbReference>
<dbReference type="SUPFAM" id="SSF52151">
    <property type="entry name" value="FabD/lysophospholipase-like"/>
    <property type="match status" value="1"/>
</dbReference>
<gene>
    <name type="primary">FASN</name>
    <name type="synonym">FAS</name>
</gene>
<accession>P08757</accession>
<name>FAS_CAPHI</name>
<feature type="chain" id="PRO_0000180275" description="Fatty acid synthase">
    <location>
        <begin position="1" status="less than"/>
        <end position="35" status="greater than"/>
    </location>
</feature>
<feature type="active site">
    <location>
        <position position="12"/>
    </location>
</feature>
<feature type="non-terminal residue">
    <location>
        <position position="1"/>
    </location>
</feature>
<feature type="non-terminal residue">
    <location>
        <position position="35"/>
    </location>
</feature>
<comment type="function">
    <text>Fatty acid synthetase catalyzes the formation of long-chain fatty acids from acetyl-CoA, malonyl-CoA and NADPH. This multifunctional protein has 7 catalytic activities as an acyl carrier protein.</text>
</comment>
<comment type="function">
    <text>This fragment is from the acyltransferase domain of the fatty acid synthetase.</text>
</comment>
<comment type="catalytic activity">
    <reaction>
        <text>acetyl-CoA + n malonyl-CoA + 2n NADPH + 2n H(+) = a long-chain fatty acid + (n+1) CoA + n CO2 + 2n NADP(+).</text>
        <dbReference type="EC" id="2.3.1.85"/>
    </reaction>
</comment>
<comment type="subunit">
    <text evidence="2 3">Homodimer which is arranged in a head to tail fashion (By similarity). Interacts with CEACAM1; this interaction is insulin and phosphorylation-dependent; reduces fatty-acid synthase activity (By similarity).</text>
</comment>
<comment type="subcellular location">
    <subcellularLocation>
        <location evidence="1">Cytoplasm</location>
    </subcellularLocation>
    <subcellularLocation>
        <location evidence="1">Melanosome</location>
    </subcellularLocation>
</comment>
<keyword id="KW-0963">Cytoplasm</keyword>
<keyword id="KW-0275">Fatty acid biosynthesis</keyword>
<keyword id="KW-0276">Fatty acid metabolism</keyword>
<keyword id="KW-0378">Hydrolase</keyword>
<keyword id="KW-0444">Lipid biosynthesis</keyword>
<keyword id="KW-0443">Lipid metabolism</keyword>
<keyword id="KW-0511">Multifunctional enzyme</keyword>
<keyword id="KW-0520">NAD</keyword>
<keyword id="KW-0521">NADP</keyword>
<keyword id="KW-1185">Reference proteome</keyword>
<keyword id="KW-0808">Transferase</keyword>
<reference key="1">
    <citation type="journal article" date="1985" name="Biochem. J.">
        <title>Amino acid sequence around the active-site serine residue in the acyltransferase domain of goat mammary fatty acid synthetase.</title>
        <authorList>
            <person name="Mikkelsen J."/>
            <person name="Hoejrup P."/>
            <person name="Rasmussen M.M."/>
            <person name="Roepstorff P."/>
            <person name="Knudsen J."/>
        </authorList>
    </citation>
    <scope>NUCLEOTIDE SEQUENCE</scope>
</reference>